<keyword id="KW-1167">Clathrin- and caveolin-independent endocytosis of virus by host</keyword>
<keyword id="KW-1165">Clathrin-mediated endocytosis of virus by host</keyword>
<keyword id="KW-1015">Disulfide bond</keyword>
<keyword id="KW-1170">Fusion of virus membrane with host endosomal membrane</keyword>
<keyword id="KW-1168">Fusion of virus membrane with host membrane</keyword>
<keyword id="KW-0325">Glycoprotein</keyword>
<keyword id="KW-0348">Hemagglutinin</keyword>
<keyword id="KW-1032">Host cell membrane</keyword>
<keyword id="KW-1043">Host membrane</keyword>
<keyword id="KW-0945">Host-virus interaction</keyword>
<keyword id="KW-0449">Lipoprotein</keyword>
<keyword id="KW-0472">Membrane</keyword>
<keyword id="KW-0564">Palmitate</keyword>
<keyword id="KW-0732">Signal</keyword>
<keyword id="KW-0812">Transmembrane</keyword>
<keyword id="KW-1133">Transmembrane helix</keyword>
<keyword id="KW-1161">Viral attachment to host cell</keyword>
<keyword id="KW-0261">Viral envelope protein</keyword>
<keyword id="KW-1162">Viral penetration into host cytoplasm</keyword>
<keyword id="KW-0946">Virion</keyword>
<keyword id="KW-1164">Virus endocytosis by host</keyword>
<keyword id="KW-1160">Virus entry into host cell</keyword>
<feature type="signal peptide" evidence="1">
    <location>
        <begin position="1"/>
        <end position="16"/>
    </location>
</feature>
<feature type="chain" id="PRO_0000440504" description="Hemagglutinin" evidence="1">
    <location>
        <begin position="17"/>
        <end position="564"/>
    </location>
</feature>
<feature type="chain" id="PRO_0000038895" description="Hemagglutinin HA1 chain" evidence="1">
    <location>
        <begin position="17"/>
        <end position="341"/>
    </location>
</feature>
<feature type="chain" id="PRO_0000038896" description="Hemagglutinin HA2 chain" evidence="1">
    <location>
        <begin position="343"/>
        <end position="564"/>
    </location>
</feature>
<feature type="topological domain" description="Extracellular" evidence="1">
    <location>
        <begin position="17"/>
        <end position="527"/>
    </location>
</feature>
<feature type="transmembrane region" description="Helical" evidence="1">
    <location>
        <begin position="528"/>
        <end position="548"/>
    </location>
</feature>
<feature type="topological domain" description="Cytoplasmic" evidence="1">
    <location>
        <begin position="549"/>
        <end position="564"/>
    </location>
</feature>
<feature type="site" description="Cleavage; by host" evidence="1">
    <location>
        <begin position="342"/>
        <end position="343"/>
    </location>
</feature>
<feature type="lipid moiety-binding region" description="S-palmitoyl cysteine; by host" evidence="1">
    <location>
        <position position="553"/>
    </location>
</feature>
<feature type="lipid moiety-binding region" description="S-palmitoyl cysteine; by host" evidence="1">
    <location>
        <position position="560"/>
    </location>
</feature>
<feature type="lipid moiety-binding region" description="S-palmitoyl cysteine; by host" evidence="1">
    <location>
        <position position="563"/>
    </location>
</feature>
<feature type="glycosylation site" description="N-linked (GlcNAc...) asparagine; by host" evidence="1">
    <location>
        <position position="26"/>
    </location>
</feature>
<feature type="glycosylation site" description="N-linked (GlcNAc...) asparagine; by host" evidence="1">
    <location>
        <position position="27"/>
    </location>
</feature>
<feature type="glycosylation site" description="N-linked (GlcNAc...) asparagine; by host" evidence="1">
    <location>
        <position position="39"/>
    </location>
</feature>
<feature type="glycosylation site" description="N-linked (GlcNAc...) asparagine; by host" evidence="1">
    <location>
        <position position="181"/>
    </location>
</feature>
<feature type="glycosylation site" description="N-linked (GlcNAc...) asparagine; by host" evidence="1">
    <location>
        <position position="252"/>
    </location>
</feature>
<feature type="glycosylation site" description="N-linked (GlcNAc...) asparagine; by host" evidence="1">
    <location>
        <position position="302"/>
    </location>
</feature>
<feature type="glycosylation site" description="N-linked (GlcNAc...) asparagine; by host" evidence="1">
    <location>
        <position position="496"/>
    </location>
</feature>
<feature type="disulfide bond" description="Interchain (between HA1 and HA2 chains)" evidence="1">
    <location>
        <begin position="20"/>
        <end position="479"/>
    </location>
</feature>
<feature type="disulfide bond" evidence="1">
    <location>
        <begin position="58"/>
        <end position="290"/>
    </location>
</feature>
<feature type="disulfide bond" evidence="1">
    <location>
        <begin position="71"/>
        <end position="83"/>
    </location>
</feature>
<feature type="disulfide bond" evidence="1">
    <location>
        <begin position="106"/>
        <end position="151"/>
    </location>
</feature>
<feature type="disulfide bond" evidence="1">
    <location>
        <begin position="294"/>
        <end position="318"/>
    </location>
</feature>
<feature type="disulfide bond" evidence="1">
    <location>
        <begin position="486"/>
        <end position="490"/>
    </location>
</feature>
<feature type="sequence conflict" description="In Ref. 2; AAA43160." evidence="2" ref="2">
    <original>T</original>
    <variation>Q</variation>
    <location>
        <position position="29"/>
    </location>
</feature>
<feature type="sequence conflict" description="In Ref. 2; AAA43160." evidence="2" ref="2">
    <original>WL</original>
    <variation>LV</variation>
    <location>
        <begin position="76"/>
        <end position="77"/>
    </location>
</feature>
<feature type="sequence conflict" description="In Ref. 2; AAA43160." evidence="2" ref="2">
    <original>T</original>
    <variation>A</variation>
    <location>
        <position position="139"/>
    </location>
</feature>
<feature type="sequence conflict" description="In Ref. 2; AAA43160." evidence="2" ref="2">
    <location>
        <position position="217"/>
    </location>
</feature>
<feature type="sequence conflict" description="In Ref. 2; AAA43160." evidence="2" ref="2">
    <original>G</original>
    <variation>V</variation>
    <location>
        <position position="299"/>
    </location>
</feature>
<feature type="sequence conflict" description="In Ref. 2; AAA43160." evidence="2" ref="2">
    <original>KM</original>
    <variation>NL</variation>
    <location>
        <begin position="425"/>
        <end position="426"/>
    </location>
</feature>
<feature type="sequence conflict" description="In Ref. 2; AAA43160." evidence="2" ref="2">
    <original>L</original>
    <variation>W</variation>
    <location>
        <position position="475"/>
    </location>
</feature>
<feature type="sequence conflict" description="In Ref. 2; AAA43160." evidence="2" ref="2">
    <original>IKL</original>
    <variation>VKW</variation>
    <location>
        <begin position="518"/>
        <end position="520"/>
    </location>
</feature>
<reference key="1">
    <citation type="journal article" date="2006" name="Science">
        <title>Large-scale sequence analysis of avian influenza isolates.</title>
        <authorList>
            <person name="Obenauer J.C."/>
            <person name="Denson J."/>
            <person name="Mehta P.K."/>
            <person name="Su X."/>
            <person name="Mukatira S."/>
            <person name="Finkelstein D.B."/>
            <person name="Xu X."/>
            <person name="Wang J."/>
            <person name="Ma J."/>
            <person name="Fan Y."/>
            <person name="Rakestraw K.M."/>
            <person name="Webster R.G."/>
            <person name="Hoffmann E."/>
            <person name="Krauss S."/>
            <person name="Zheng J."/>
            <person name="Zhang Z."/>
            <person name="Naeve C.W."/>
        </authorList>
    </citation>
    <scope>NUCLEOTIDE SEQUENCE [GENOMIC RNA]</scope>
</reference>
<reference key="2">
    <citation type="journal article" date="1984" name="Virology">
        <title>Is virulence of H5N2 influenza viruses in chickens associated with loss of carbohydrate from the hemagglutinin?</title>
        <authorList>
            <person name="Kawaoka Y."/>
            <person name="Naeve C.W."/>
            <person name="Webster R.G."/>
        </authorList>
    </citation>
    <scope>NUCLEOTIDE SEQUENCE [GENOMIC RNA] OF 17-564</scope>
</reference>
<organism>
    <name type="scientific">Influenza A virus (strain A/Chicken/Pennsylvania/1/1983 H5N2)</name>
    <dbReference type="NCBI Taxonomy" id="385586"/>
    <lineage>
        <taxon>Viruses</taxon>
        <taxon>Riboviria</taxon>
        <taxon>Orthornavirae</taxon>
        <taxon>Negarnaviricota</taxon>
        <taxon>Polyploviricotina</taxon>
        <taxon>Insthoviricetes</taxon>
        <taxon>Articulavirales</taxon>
        <taxon>Orthomyxoviridae</taxon>
        <taxon>Alphainfluenzavirus</taxon>
        <taxon>Alphainfluenzavirus influenzae</taxon>
        <taxon>Influenza A virus</taxon>
    </lineage>
</organism>
<sequence length="564" mass="63577">MERTVIALAIISVVKGDQICIGYHANNSTKQIDTIMEKNVTVTHAQDILEKKHNGKLCSLKGVKPLILKDCSVAGWLLGNPMCDEFLNAPEWSYIVEKNNPINGLCYPGDFNDYEELKHLVSSTNLFEKIRIIPRNSWTNHDASSGVSSACPHLGRSSFFRNVVWLIKKNNVYPTIKRTYNNTNVEDLLILWGIHHPNDAAEQAKLYQNLNAYVSVGTSTLNQRSIPKIATRPKVNGQSGRMEFFWTILRPNDTISFESTGNFIAPEYAYKIVKKGDSAIMRSELEYGNCDTKCQTPLGAINSSMPFHNVHPLTIGECPKYVKSDKLVLATGMRNVPQKKKRGLFGAIAGFIEGGWQGMVDGWYGYHHINGQGSGYAADKKSTQKAIDGITNKVNSIIDKMNTQFEAVGREFNNLERRIENLNKKMEDGFIDVWTYNAELLVLMENERTLDLHDSNVKNLYDKVRLQLRDNAKELGNGCFEFYHKCDNECMESVRNGTYNYPKYSEESKLKRKEIDGIKLESMGTYQILSIYSTVASSLALAIMVAGLSFWMCSNGSLQCRICI</sequence>
<evidence type="ECO:0000255" key="1">
    <source>
        <dbReference type="HAMAP-Rule" id="MF_04072"/>
    </source>
</evidence>
<evidence type="ECO:0000305" key="2"/>
<dbReference type="EMBL" id="CY015073">
    <property type="protein sequence ID" value="ABI85095.1"/>
    <property type="molecule type" value="Other_RNA"/>
</dbReference>
<dbReference type="EMBL" id="M18001">
    <property type="protein sequence ID" value="AAA43160.1"/>
    <property type="molecule type" value="Genomic_RNA"/>
</dbReference>
<dbReference type="SMR" id="P07976"/>
<dbReference type="GlyCosmos" id="P07976">
    <property type="glycosylation" value="7 sites, No reported glycans"/>
</dbReference>
<dbReference type="PRO" id="PR:P07976"/>
<dbReference type="Proteomes" id="UP000008584">
    <property type="component" value="Genome"/>
</dbReference>
<dbReference type="GO" id="GO:0020002">
    <property type="term" value="C:host cell plasma membrane"/>
    <property type="evidence" value="ECO:0007669"/>
    <property type="project" value="UniProtKB-SubCell"/>
</dbReference>
<dbReference type="GO" id="GO:0016020">
    <property type="term" value="C:membrane"/>
    <property type="evidence" value="ECO:0007669"/>
    <property type="project" value="UniProtKB-UniRule"/>
</dbReference>
<dbReference type="GO" id="GO:0019031">
    <property type="term" value="C:viral envelope"/>
    <property type="evidence" value="ECO:0007669"/>
    <property type="project" value="UniProtKB-UniRule"/>
</dbReference>
<dbReference type="GO" id="GO:0055036">
    <property type="term" value="C:virion membrane"/>
    <property type="evidence" value="ECO:0007669"/>
    <property type="project" value="UniProtKB-SubCell"/>
</dbReference>
<dbReference type="GO" id="GO:0046789">
    <property type="term" value="F:host cell surface receptor binding"/>
    <property type="evidence" value="ECO:0007669"/>
    <property type="project" value="UniProtKB-UniRule"/>
</dbReference>
<dbReference type="GO" id="GO:0075512">
    <property type="term" value="P:clathrin-dependent endocytosis of virus by host cell"/>
    <property type="evidence" value="ECO:0007669"/>
    <property type="project" value="UniProtKB-UniRule"/>
</dbReference>
<dbReference type="GO" id="GO:0039654">
    <property type="term" value="P:fusion of virus membrane with host endosome membrane"/>
    <property type="evidence" value="ECO:0007669"/>
    <property type="project" value="UniProtKB-UniRule"/>
</dbReference>
<dbReference type="GO" id="GO:0019064">
    <property type="term" value="P:fusion of virus membrane with host plasma membrane"/>
    <property type="evidence" value="ECO:0007669"/>
    <property type="project" value="InterPro"/>
</dbReference>
<dbReference type="GO" id="GO:0046761">
    <property type="term" value="P:viral budding from plasma membrane"/>
    <property type="evidence" value="ECO:0007669"/>
    <property type="project" value="UniProtKB-UniRule"/>
</dbReference>
<dbReference type="GO" id="GO:0019062">
    <property type="term" value="P:virion attachment to host cell"/>
    <property type="evidence" value="ECO:0007669"/>
    <property type="project" value="UniProtKB-KW"/>
</dbReference>
<dbReference type="FunFam" id="3.90.209.20:FF:000001">
    <property type="entry name" value="Hemagglutinin"/>
    <property type="match status" value="1"/>
</dbReference>
<dbReference type="Gene3D" id="3.90.20.10">
    <property type="match status" value="1"/>
</dbReference>
<dbReference type="Gene3D" id="3.90.209.20">
    <property type="match status" value="1"/>
</dbReference>
<dbReference type="HAMAP" id="MF_04072">
    <property type="entry name" value="INFV_HEMA"/>
    <property type="match status" value="1"/>
</dbReference>
<dbReference type="InterPro" id="IPR008980">
    <property type="entry name" value="Capsid_hemagglutn"/>
</dbReference>
<dbReference type="InterPro" id="IPR013828">
    <property type="entry name" value="Hemagglutn_HA1_a/b_dom_sf"/>
</dbReference>
<dbReference type="InterPro" id="IPR000149">
    <property type="entry name" value="Hemagglutn_influenz_A"/>
</dbReference>
<dbReference type="InterPro" id="IPR001364">
    <property type="entry name" value="Hemagglutn_influenz_A/B"/>
</dbReference>
<dbReference type="Pfam" id="PF00509">
    <property type="entry name" value="Hemagglutinin"/>
    <property type="match status" value="1"/>
</dbReference>
<dbReference type="PRINTS" id="PR00330">
    <property type="entry name" value="HEMAGGLUTN1"/>
</dbReference>
<dbReference type="PRINTS" id="PR00329">
    <property type="entry name" value="HEMAGGLUTN12"/>
</dbReference>
<dbReference type="SUPFAM" id="SSF58064">
    <property type="entry name" value="Influenza hemagglutinin (stalk)"/>
    <property type="match status" value="1"/>
</dbReference>
<dbReference type="SUPFAM" id="SSF49818">
    <property type="entry name" value="Viral protein domain"/>
    <property type="match status" value="1"/>
</dbReference>
<protein>
    <recommendedName>
        <fullName evidence="1">Hemagglutinin</fullName>
    </recommendedName>
    <component>
        <recommendedName>
            <fullName evidence="1">Hemagglutinin HA1 chain</fullName>
        </recommendedName>
    </component>
    <component>
        <recommendedName>
            <fullName evidence="1">Hemagglutinin HA2 chain</fullName>
        </recommendedName>
    </component>
</protein>
<proteinExistence type="inferred from homology"/>
<comment type="function">
    <text>Binds to sialic acid-containing receptors on the cell surface, bringing about the attachment of the virus particle to the cell. This attachment induces virion internalization of about two third of the virus particles through clathrin-dependent endocytosis and about one third through a clathrin- and caveolin-independent pathway. Plays a major role in the determination of host range restriction and virulence. Class I viral fusion protein. Responsible for penetration of the virus into the cell cytoplasm by mediating the fusion of the membrane of the endocytosed virus particle with the endosomal membrane. Low pH in endosomes induces an irreversible conformational change in HA2, releasing the fusion hydrophobic peptide. Several trimers are required to form a competent fusion pore.</text>
</comment>
<comment type="function">
    <text evidence="1">Binds to sialic acid-containing receptors on the cell surface, bringing about the attachment of the virus particle to the cell. This attachment induces virion internalization either through clathrin-dependent endocytosis or through clathrin- and caveolin-independent pathway. Plays a major role in the determination of host range restriction and virulence. Class I viral fusion protein. Responsible for penetration of the virus into the cell cytoplasm by mediating the fusion of the membrane of the endocytosed virus particle with the endosomal membrane. Low pH in endosomes induces an irreversible conformational change in HA2, releasing the fusion hydrophobic peptide. Several trimers are required to form a competent fusion pore.</text>
</comment>
<comment type="subunit">
    <text evidence="1">Homotrimer of disulfide-linked HA1-HA2.</text>
</comment>
<comment type="subcellular location">
    <subcellularLocation>
        <location evidence="1">Virion membrane</location>
        <topology evidence="1">Single-pass type I membrane protein</topology>
    </subcellularLocation>
    <subcellularLocation>
        <location evidence="1">Host apical cell membrane</location>
        <topology evidence="1">Single-pass type I membrane protein</topology>
    </subcellularLocation>
    <text evidence="1">Targeted to the apical plasma membrane in epithelial polarized cells through a signal present in the transmembrane domain. Associated with glycosphingolipid- and cholesterol-enriched detergent-resistant lipid rafts.</text>
</comment>
<comment type="PTM">
    <text evidence="1">Palmitoylated.</text>
</comment>
<comment type="PTM">
    <text evidence="1">In natural infection, inactive HA is matured into HA1 and HA2 outside the cell by one or more trypsin-like, arginine-specific endoprotease secreted by the bronchial epithelial cells. One identified protease that may be involved in this process is secreted in lungs by club cells.</text>
</comment>
<comment type="miscellaneous">
    <text>Major glycoprotein, comprises over 80% of the envelope proteins present in virus particle.</text>
</comment>
<comment type="miscellaneous">
    <text>The extent of infection into host organism is determined by HA. Influenza viruses bud from the apical surface of polarized epithelial cells (e.g. bronchial epithelial cells) into lumen of lungs and are therefore usually pneumotropic. The reason is that HA is cleaved by tryptase clara which is restricted to lungs. However, HAs of H5 and H7 pantropic avian viruses subtypes can be cleaved by furin and subtilisin-type enzymes, allowing the virus to grow in other organs than lungs.</text>
</comment>
<comment type="miscellaneous">
    <text evidence="2">The influenza A genome consist of 8 RNA segments. Genetic variation of hemagglutinin and/or neuraminidase genes results in the emergence of new influenza strains. The mechanism of variation can be the result of point mutations or the result of genetic reassortment between segments of two different strains.</text>
</comment>
<comment type="similarity">
    <text evidence="1">Belongs to the influenza viruses hemagglutinin family.</text>
</comment>
<accession>P07976</accession>
<accession>Q0A2I7</accession>
<accession>Q84009</accession>
<accession>Q84010</accession>
<organismHost>
    <name type="scientific">Aves</name>
    <dbReference type="NCBI Taxonomy" id="8782"/>
</organismHost>
<gene>
    <name evidence="1" type="primary">HA</name>
</gene>
<name>HEMA_I83A5</name>